<protein>
    <recommendedName>
        <fullName evidence="1">Methionyl-tRNA formyltransferase</fullName>
        <ecNumber evidence="1">2.1.2.9</ecNumber>
    </recommendedName>
</protein>
<accession>B5YF45</accession>
<proteinExistence type="inferred from homology"/>
<sequence length="312" mass="35138">MRVIYFGTPEFSRIILEKIYDHLNIIGIVTQPDKPKGRGKKILPSPVKQFAINKGITVYQPEKLKGNIEFFNIIKDLKPDALIVASYGKIIPEDILNIPPYGGINVHASILPKYRGAAPIERALMNCEKETGVSIMKMEKGLDTGPVYAIKKIPILPDDDKGTLSIKLANLGADLLLEVLPLIKEGKLIPVPQDESLASYAPKLTKEEEIINWNMDGEKICCQIRALSPEPGAMTFFRGKILKVFKANFEKRFFDEDVINGTIIEQDRKKGIGVKVENGILWLLELQPEGKKKMNFLEFMNGYRLNIGERFE</sequence>
<dbReference type="EC" id="2.1.2.9" evidence="1"/>
<dbReference type="EMBL" id="CP001146">
    <property type="protein sequence ID" value="ACI19813.1"/>
    <property type="molecule type" value="Genomic_DNA"/>
</dbReference>
<dbReference type="RefSeq" id="WP_012548445.1">
    <property type="nucleotide sequence ID" value="NC_011297.1"/>
</dbReference>
<dbReference type="SMR" id="B5YF45"/>
<dbReference type="STRING" id="309799.DICTH_1334"/>
<dbReference type="PaxDb" id="309799-DICTH_1334"/>
<dbReference type="KEGG" id="dth:DICTH_1334"/>
<dbReference type="eggNOG" id="COG0223">
    <property type="taxonomic scope" value="Bacteria"/>
</dbReference>
<dbReference type="HOGENOM" id="CLU_033347_1_1_0"/>
<dbReference type="OrthoDB" id="9802815at2"/>
<dbReference type="Proteomes" id="UP000001733">
    <property type="component" value="Chromosome"/>
</dbReference>
<dbReference type="GO" id="GO:0005829">
    <property type="term" value="C:cytosol"/>
    <property type="evidence" value="ECO:0007669"/>
    <property type="project" value="TreeGrafter"/>
</dbReference>
<dbReference type="GO" id="GO:0004479">
    <property type="term" value="F:methionyl-tRNA formyltransferase activity"/>
    <property type="evidence" value="ECO:0007669"/>
    <property type="project" value="UniProtKB-UniRule"/>
</dbReference>
<dbReference type="CDD" id="cd08646">
    <property type="entry name" value="FMT_core_Met-tRNA-FMT_N"/>
    <property type="match status" value="1"/>
</dbReference>
<dbReference type="CDD" id="cd08704">
    <property type="entry name" value="Met_tRNA_FMT_C"/>
    <property type="match status" value="1"/>
</dbReference>
<dbReference type="FunFam" id="3.40.50.12230:FF:000001">
    <property type="entry name" value="Methionyl-tRNA formyltransferase"/>
    <property type="match status" value="1"/>
</dbReference>
<dbReference type="Gene3D" id="3.40.50.12230">
    <property type="match status" value="1"/>
</dbReference>
<dbReference type="HAMAP" id="MF_00182">
    <property type="entry name" value="Formyl_trans"/>
    <property type="match status" value="1"/>
</dbReference>
<dbReference type="InterPro" id="IPR005794">
    <property type="entry name" value="Fmt"/>
</dbReference>
<dbReference type="InterPro" id="IPR005793">
    <property type="entry name" value="Formyl_trans_C"/>
</dbReference>
<dbReference type="InterPro" id="IPR002376">
    <property type="entry name" value="Formyl_transf_N"/>
</dbReference>
<dbReference type="InterPro" id="IPR036477">
    <property type="entry name" value="Formyl_transf_N_sf"/>
</dbReference>
<dbReference type="InterPro" id="IPR011034">
    <property type="entry name" value="Formyl_transferase-like_C_sf"/>
</dbReference>
<dbReference type="InterPro" id="IPR001555">
    <property type="entry name" value="GART_AS"/>
</dbReference>
<dbReference type="InterPro" id="IPR044135">
    <property type="entry name" value="Met-tRNA-FMT_C"/>
</dbReference>
<dbReference type="InterPro" id="IPR041711">
    <property type="entry name" value="Met-tRNA-FMT_N"/>
</dbReference>
<dbReference type="NCBIfam" id="TIGR00460">
    <property type="entry name" value="fmt"/>
    <property type="match status" value="1"/>
</dbReference>
<dbReference type="PANTHER" id="PTHR11138">
    <property type="entry name" value="METHIONYL-TRNA FORMYLTRANSFERASE"/>
    <property type="match status" value="1"/>
</dbReference>
<dbReference type="PANTHER" id="PTHR11138:SF5">
    <property type="entry name" value="METHIONYL-TRNA FORMYLTRANSFERASE, MITOCHONDRIAL"/>
    <property type="match status" value="1"/>
</dbReference>
<dbReference type="Pfam" id="PF02911">
    <property type="entry name" value="Formyl_trans_C"/>
    <property type="match status" value="1"/>
</dbReference>
<dbReference type="Pfam" id="PF00551">
    <property type="entry name" value="Formyl_trans_N"/>
    <property type="match status" value="1"/>
</dbReference>
<dbReference type="SUPFAM" id="SSF50486">
    <property type="entry name" value="FMT C-terminal domain-like"/>
    <property type="match status" value="1"/>
</dbReference>
<dbReference type="SUPFAM" id="SSF53328">
    <property type="entry name" value="Formyltransferase"/>
    <property type="match status" value="1"/>
</dbReference>
<dbReference type="PROSITE" id="PS00373">
    <property type="entry name" value="GART"/>
    <property type="match status" value="1"/>
</dbReference>
<reference key="1">
    <citation type="journal article" date="2014" name="Genome Announc.">
        <title>Complete Genome Sequence of the Extreme Thermophile Dictyoglomus thermophilum H-6-12.</title>
        <authorList>
            <person name="Coil D.A."/>
            <person name="Badger J.H."/>
            <person name="Forberger H.C."/>
            <person name="Riggs F."/>
            <person name="Madupu R."/>
            <person name="Fedorova N."/>
            <person name="Ward N."/>
            <person name="Robb F.T."/>
            <person name="Eisen J.A."/>
        </authorList>
    </citation>
    <scope>NUCLEOTIDE SEQUENCE [LARGE SCALE GENOMIC DNA]</scope>
    <source>
        <strain>ATCC 35947 / DSM 3960 / H-6-12</strain>
    </source>
</reference>
<comment type="function">
    <text evidence="1">Attaches a formyl group to the free amino group of methionyl-tRNA(fMet). The formyl group appears to play a dual role in the initiator identity of N-formylmethionyl-tRNA by promoting its recognition by IF2 and preventing the misappropriation of this tRNA by the elongation apparatus.</text>
</comment>
<comment type="catalytic activity">
    <reaction evidence="1">
        <text>L-methionyl-tRNA(fMet) + (6R)-10-formyltetrahydrofolate = N-formyl-L-methionyl-tRNA(fMet) + (6S)-5,6,7,8-tetrahydrofolate + H(+)</text>
        <dbReference type="Rhea" id="RHEA:24380"/>
        <dbReference type="Rhea" id="RHEA-COMP:9952"/>
        <dbReference type="Rhea" id="RHEA-COMP:9953"/>
        <dbReference type="ChEBI" id="CHEBI:15378"/>
        <dbReference type="ChEBI" id="CHEBI:57453"/>
        <dbReference type="ChEBI" id="CHEBI:78530"/>
        <dbReference type="ChEBI" id="CHEBI:78844"/>
        <dbReference type="ChEBI" id="CHEBI:195366"/>
        <dbReference type="EC" id="2.1.2.9"/>
    </reaction>
</comment>
<comment type="similarity">
    <text evidence="1">Belongs to the Fmt family.</text>
</comment>
<name>FMT_DICT6</name>
<keyword id="KW-0648">Protein biosynthesis</keyword>
<keyword id="KW-0808">Transferase</keyword>
<evidence type="ECO:0000255" key="1">
    <source>
        <dbReference type="HAMAP-Rule" id="MF_00182"/>
    </source>
</evidence>
<gene>
    <name evidence="1" type="primary">fmt</name>
    <name type="ordered locus">DICTH_1334</name>
</gene>
<organism>
    <name type="scientific">Dictyoglomus thermophilum (strain ATCC 35947 / DSM 3960 / H-6-12)</name>
    <dbReference type="NCBI Taxonomy" id="309799"/>
    <lineage>
        <taxon>Bacteria</taxon>
        <taxon>Pseudomonadati</taxon>
        <taxon>Dictyoglomota</taxon>
        <taxon>Dictyoglomia</taxon>
        <taxon>Dictyoglomales</taxon>
        <taxon>Dictyoglomaceae</taxon>
        <taxon>Dictyoglomus</taxon>
    </lineage>
</organism>
<feature type="chain" id="PRO_1000098399" description="Methionyl-tRNA formyltransferase">
    <location>
        <begin position="1"/>
        <end position="312"/>
    </location>
</feature>
<feature type="binding site" evidence="1">
    <location>
        <begin position="109"/>
        <end position="112"/>
    </location>
    <ligand>
        <name>(6S)-5,6,7,8-tetrahydrofolate</name>
        <dbReference type="ChEBI" id="CHEBI:57453"/>
    </ligand>
</feature>